<accession>Q4A5D6</accession>
<name>RL6_MYCS5</name>
<keyword id="KW-1185">Reference proteome</keyword>
<keyword id="KW-0687">Ribonucleoprotein</keyword>
<keyword id="KW-0689">Ribosomal protein</keyword>
<keyword id="KW-0694">RNA-binding</keyword>
<keyword id="KW-0699">rRNA-binding</keyword>
<protein>
    <recommendedName>
        <fullName evidence="1">Large ribosomal subunit protein uL6</fullName>
    </recommendedName>
    <alternativeName>
        <fullName evidence="3">50S ribosomal protein L6</fullName>
    </alternativeName>
</protein>
<proteinExistence type="inferred from homology"/>
<dbReference type="EMBL" id="AE017245">
    <property type="protein sequence ID" value="AAZ44035.1"/>
    <property type="molecule type" value="Genomic_DNA"/>
</dbReference>
<dbReference type="RefSeq" id="WP_011283764.1">
    <property type="nucleotide sequence ID" value="NC_007294.1"/>
</dbReference>
<dbReference type="SMR" id="Q4A5D6"/>
<dbReference type="STRING" id="262723.MS53_0628"/>
<dbReference type="KEGG" id="msy:MS53_0628"/>
<dbReference type="eggNOG" id="COG0097">
    <property type="taxonomic scope" value="Bacteria"/>
</dbReference>
<dbReference type="HOGENOM" id="CLU_065464_1_2_14"/>
<dbReference type="OrthoDB" id="9805007at2"/>
<dbReference type="Proteomes" id="UP000000549">
    <property type="component" value="Chromosome"/>
</dbReference>
<dbReference type="GO" id="GO:0022625">
    <property type="term" value="C:cytosolic large ribosomal subunit"/>
    <property type="evidence" value="ECO:0007669"/>
    <property type="project" value="TreeGrafter"/>
</dbReference>
<dbReference type="GO" id="GO:0019843">
    <property type="term" value="F:rRNA binding"/>
    <property type="evidence" value="ECO:0007669"/>
    <property type="project" value="UniProtKB-UniRule"/>
</dbReference>
<dbReference type="GO" id="GO:0003735">
    <property type="term" value="F:structural constituent of ribosome"/>
    <property type="evidence" value="ECO:0007669"/>
    <property type="project" value="InterPro"/>
</dbReference>
<dbReference type="GO" id="GO:0002181">
    <property type="term" value="P:cytoplasmic translation"/>
    <property type="evidence" value="ECO:0007669"/>
    <property type="project" value="TreeGrafter"/>
</dbReference>
<dbReference type="FunFam" id="3.90.930.12:FF:000001">
    <property type="entry name" value="50S ribosomal protein L6"/>
    <property type="match status" value="1"/>
</dbReference>
<dbReference type="Gene3D" id="3.90.930.12">
    <property type="entry name" value="Ribosomal protein L6, alpha-beta domain"/>
    <property type="match status" value="2"/>
</dbReference>
<dbReference type="HAMAP" id="MF_01365_B">
    <property type="entry name" value="Ribosomal_uL6_B"/>
    <property type="match status" value="1"/>
</dbReference>
<dbReference type="InterPro" id="IPR000702">
    <property type="entry name" value="Ribosomal_uL6-like"/>
</dbReference>
<dbReference type="InterPro" id="IPR036789">
    <property type="entry name" value="Ribosomal_uL6-like_a/b-dom_sf"/>
</dbReference>
<dbReference type="InterPro" id="IPR020040">
    <property type="entry name" value="Ribosomal_uL6_a/b-dom"/>
</dbReference>
<dbReference type="InterPro" id="IPR019906">
    <property type="entry name" value="Ribosomal_uL6_bac-type"/>
</dbReference>
<dbReference type="NCBIfam" id="TIGR03654">
    <property type="entry name" value="L6_bact"/>
    <property type="match status" value="1"/>
</dbReference>
<dbReference type="PANTHER" id="PTHR11655">
    <property type="entry name" value="60S/50S RIBOSOMAL PROTEIN L6/L9"/>
    <property type="match status" value="1"/>
</dbReference>
<dbReference type="PANTHER" id="PTHR11655:SF14">
    <property type="entry name" value="LARGE RIBOSOMAL SUBUNIT PROTEIN UL6M"/>
    <property type="match status" value="1"/>
</dbReference>
<dbReference type="Pfam" id="PF00347">
    <property type="entry name" value="Ribosomal_L6"/>
    <property type="match status" value="2"/>
</dbReference>
<dbReference type="PIRSF" id="PIRSF002162">
    <property type="entry name" value="Ribosomal_L6"/>
    <property type="match status" value="1"/>
</dbReference>
<dbReference type="PRINTS" id="PR00059">
    <property type="entry name" value="RIBOSOMALL6"/>
</dbReference>
<dbReference type="SUPFAM" id="SSF56053">
    <property type="entry name" value="Ribosomal protein L6"/>
    <property type="match status" value="2"/>
</dbReference>
<feature type="chain" id="PRO_0000265268" description="Large ribosomal subunit protein uL6">
    <location>
        <begin position="1"/>
        <end position="180"/>
    </location>
</feature>
<feature type="region of interest" description="Disordered" evidence="2">
    <location>
        <begin position="158"/>
        <end position="180"/>
    </location>
</feature>
<sequence>MSRVGNRVLVVPAGVTVDISASNFVSVTGKLGKLERAFSPKVKITLQDNTLTTQRLNEEKATKQLHGTTNALLANMLKGVSEGFQINLEIKGVGYKAELKGNKLVVAAGYSHLVTLDIPSNVEVKVPKPVEISVKGIDKQAVGAFAAVVREIRKPNPYSGKGISYKGEKIRRKEGKTASK</sequence>
<reference key="1">
    <citation type="journal article" date="2005" name="J. Bacteriol.">
        <title>Swine and poultry pathogens: the complete genome sequences of two strains of Mycoplasma hyopneumoniae and a strain of Mycoplasma synoviae.</title>
        <authorList>
            <person name="Vasconcelos A.T.R."/>
            <person name="Ferreira H.B."/>
            <person name="Bizarro C.V."/>
            <person name="Bonatto S.L."/>
            <person name="Carvalho M.O."/>
            <person name="Pinto P.M."/>
            <person name="Almeida D.F."/>
            <person name="Almeida L.G.P."/>
            <person name="Almeida R."/>
            <person name="Alves-Junior L."/>
            <person name="Assuncao E.N."/>
            <person name="Azevedo V.A.C."/>
            <person name="Bogo M.R."/>
            <person name="Brigido M.M."/>
            <person name="Brocchi M."/>
            <person name="Burity H.A."/>
            <person name="Camargo A.A."/>
            <person name="Camargo S.S."/>
            <person name="Carepo M.S."/>
            <person name="Carraro D.M."/>
            <person name="de Mattos Cascardo J.C."/>
            <person name="Castro L.A."/>
            <person name="Cavalcanti G."/>
            <person name="Chemale G."/>
            <person name="Collevatti R.G."/>
            <person name="Cunha C.W."/>
            <person name="Dallagiovanna B."/>
            <person name="Dambros B.P."/>
            <person name="Dellagostin O.A."/>
            <person name="Falcao C."/>
            <person name="Fantinatti-Garboggini F."/>
            <person name="Felipe M.S.S."/>
            <person name="Fiorentin L."/>
            <person name="Franco G.R."/>
            <person name="Freitas N.S.A."/>
            <person name="Frias D."/>
            <person name="Grangeiro T.B."/>
            <person name="Grisard E.C."/>
            <person name="Guimaraes C.T."/>
            <person name="Hungria M."/>
            <person name="Jardim S.N."/>
            <person name="Krieger M.A."/>
            <person name="Laurino J.P."/>
            <person name="Lima L.F.A."/>
            <person name="Lopes M.I."/>
            <person name="Loreto E.L.S."/>
            <person name="Madeira H.M.F."/>
            <person name="Manfio G.P."/>
            <person name="Maranhao A.Q."/>
            <person name="Martinkovics C.T."/>
            <person name="Medeiros S.R.B."/>
            <person name="Moreira M.A.M."/>
            <person name="Neiva M."/>
            <person name="Ramalho-Neto C.E."/>
            <person name="Nicolas M.F."/>
            <person name="Oliveira S.C."/>
            <person name="Paixao R.F.C."/>
            <person name="Pedrosa F.O."/>
            <person name="Pena S.D.J."/>
            <person name="Pereira M."/>
            <person name="Pereira-Ferrari L."/>
            <person name="Piffer I."/>
            <person name="Pinto L.S."/>
            <person name="Potrich D.P."/>
            <person name="Salim A.C.M."/>
            <person name="Santos F.R."/>
            <person name="Schmitt R."/>
            <person name="Schneider M.P.C."/>
            <person name="Schrank A."/>
            <person name="Schrank I.S."/>
            <person name="Schuck A.F."/>
            <person name="Seuanez H.N."/>
            <person name="Silva D.W."/>
            <person name="Silva R."/>
            <person name="Silva S.C."/>
            <person name="Soares C.M.A."/>
            <person name="Souza K.R.L."/>
            <person name="Souza R.C."/>
            <person name="Staats C.C."/>
            <person name="Steffens M.B.R."/>
            <person name="Teixeira S.M.R."/>
            <person name="Urmenyi T.P."/>
            <person name="Vainstein M.H."/>
            <person name="Zuccherato L.W."/>
            <person name="Simpson A.J.G."/>
            <person name="Zaha A."/>
        </authorList>
    </citation>
    <scope>NUCLEOTIDE SEQUENCE [LARGE SCALE GENOMIC DNA]</scope>
    <source>
        <strain>53</strain>
    </source>
</reference>
<comment type="function">
    <text evidence="1">This protein binds to the 23S rRNA, and is important in its secondary structure. It is located near the subunit interface in the base of the L7/L12 stalk, and near the tRNA binding site of the peptidyltransferase center.</text>
</comment>
<comment type="subunit">
    <text evidence="1">Part of the 50S ribosomal subunit.</text>
</comment>
<comment type="similarity">
    <text evidence="1">Belongs to the universal ribosomal protein uL6 family.</text>
</comment>
<gene>
    <name evidence="1" type="primary">rplF</name>
    <name type="ordered locus">MS53_0628</name>
</gene>
<organism>
    <name type="scientific">Mycoplasmopsis synoviae (strain 53)</name>
    <name type="common">Mycoplasma synoviae</name>
    <dbReference type="NCBI Taxonomy" id="262723"/>
    <lineage>
        <taxon>Bacteria</taxon>
        <taxon>Bacillati</taxon>
        <taxon>Mycoplasmatota</taxon>
        <taxon>Mycoplasmoidales</taxon>
        <taxon>Metamycoplasmataceae</taxon>
        <taxon>Mycoplasmopsis</taxon>
    </lineage>
</organism>
<evidence type="ECO:0000255" key="1">
    <source>
        <dbReference type="HAMAP-Rule" id="MF_01365"/>
    </source>
</evidence>
<evidence type="ECO:0000256" key="2">
    <source>
        <dbReference type="SAM" id="MobiDB-lite"/>
    </source>
</evidence>
<evidence type="ECO:0000305" key="3"/>